<evidence type="ECO:0000255" key="1">
    <source>
        <dbReference type="HAMAP-Rule" id="MF_01400"/>
    </source>
</evidence>
<evidence type="ECO:0000255" key="2">
    <source>
        <dbReference type="PROSITE-ProRule" id="PRU01126"/>
    </source>
</evidence>
<accession>P0DC43</accession>
<accession>Q8K7M6</accession>
<keyword id="KW-0560">Oxidoreductase</keyword>
<protein>
    <recommendedName>
        <fullName evidence="1">Peptide methionine sulfoxide reductase MsrB</fullName>
        <ecNumber evidence="1">1.8.4.12</ecNumber>
    </recommendedName>
    <alternativeName>
        <fullName evidence="1">Peptide-methionine (R)-S-oxide reductase</fullName>
    </alternativeName>
</protein>
<sequence length="145" mass="16369">METSDELKQRIGELSYEVTQHAATESPFTGEYDDFFEKGIYVDIVSGEVLFSSLDKFNSGCGWPAFSKPIENRMVTNHDDSSYGMRRVEVKSREAGSHLGHVFSDGPKEAGGLRYCINSAALKFIPYDQMEKEGYAQWLTLFDET</sequence>
<comment type="catalytic activity">
    <reaction evidence="1">
        <text>L-methionyl-[protein] + [thioredoxin]-disulfide + H2O = L-methionyl-(R)-S-oxide-[protein] + [thioredoxin]-dithiol</text>
        <dbReference type="Rhea" id="RHEA:24164"/>
        <dbReference type="Rhea" id="RHEA-COMP:10698"/>
        <dbReference type="Rhea" id="RHEA-COMP:10700"/>
        <dbReference type="Rhea" id="RHEA-COMP:12313"/>
        <dbReference type="Rhea" id="RHEA-COMP:12314"/>
        <dbReference type="ChEBI" id="CHEBI:15377"/>
        <dbReference type="ChEBI" id="CHEBI:16044"/>
        <dbReference type="ChEBI" id="CHEBI:29950"/>
        <dbReference type="ChEBI" id="CHEBI:45764"/>
        <dbReference type="ChEBI" id="CHEBI:50058"/>
        <dbReference type="EC" id="1.8.4.12"/>
    </reaction>
</comment>
<comment type="similarity">
    <text evidence="1">Belongs to the MsrB Met sulfoxide reductase family.</text>
</comment>
<feature type="chain" id="PRO_0000411409" description="Peptide methionine sulfoxide reductase MsrB">
    <location>
        <begin position="1"/>
        <end position="145"/>
    </location>
</feature>
<feature type="domain" description="MsrB" evidence="2">
    <location>
        <begin position="4"/>
        <end position="127"/>
    </location>
</feature>
<feature type="active site" description="Nucleophile" evidence="2">
    <location>
        <position position="116"/>
    </location>
</feature>
<proteinExistence type="inferred from homology"/>
<name>MSRB_STRPQ</name>
<gene>
    <name evidence="1" type="primary">msrB</name>
    <name type="synonym">csrA</name>
    <name type="ordered locus">SPs0940</name>
</gene>
<dbReference type="EC" id="1.8.4.12" evidence="1"/>
<dbReference type="EMBL" id="BA000034">
    <property type="protein sequence ID" value="BAC64035.1"/>
    <property type="molecule type" value="Genomic_DNA"/>
</dbReference>
<dbReference type="RefSeq" id="WP_011054453.1">
    <property type="nucleotide sequence ID" value="NC_004606.1"/>
</dbReference>
<dbReference type="SMR" id="P0DC43"/>
<dbReference type="KEGG" id="sps:SPs0940"/>
<dbReference type="HOGENOM" id="CLU_031040_8_5_9"/>
<dbReference type="GO" id="GO:0005737">
    <property type="term" value="C:cytoplasm"/>
    <property type="evidence" value="ECO:0007669"/>
    <property type="project" value="TreeGrafter"/>
</dbReference>
<dbReference type="GO" id="GO:0033743">
    <property type="term" value="F:peptide-methionine (R)-S-oxide reductase activity"/>
    <property type="evidence" value="ECO:0007669"/>
    <property type="project" value="UniProtKB-UniRule"/>
</dbReference>
<dbReference type="GO" id="GO:0030091">
    <property type="term" value="P:protein repair"/>
    <property type="evidence" value="ECO:0007669"/>
    <property type="project" value="InterPro"/>
</dbReference>
<dbReference type="GO" id="GO:0006979">
    <property type="term" value="P:response to oxidative stress"/>
    <property type="evidence" value="ECO:0007669"/>
    <property type="project" value="InterPro"/>
</dbReference>
<dbReference type="FunFam" id="2.170.150.20:FF:000003">
    <property type="entry name" value="Peptide methionine sulfoxide reductase MsrB"/>
    <property type="match status" value="1"/>
</dbReference>
<dbReference type="Gene3D" id="2.170.150.20">
    <property type="entry name" value="Peptide methionine sulfoxide reductase"/>
    <property type="match status" value="1"/>
</dbReference>
<dbReference type="HAMAP" id="MF_01400">
    <property type="entry name" value="MsrB"/>
    <property type="match status" value="1"/>
</dbReference>
<dbReference type="InterPro" id="IPR028427">
    <property type="entry name" value="Met_Sox_Rdtase_MsrB"/>
</dbReference>
<dbReference type="InterPro" id="IPR002579">
    <property type="entry name" value="Met_Sox_Rdtase_MsrB_dom"/>
</dbReference>
<dbReference type="InterPro" id="IPR011057">
    <property type="entry name" value="Mss4-like_sf"/>
</dbReference>
<dbReference type="NCBIfam" id="TIGR00357">
    <property type="entry name" value="peptide-methionine (R)-S-oxide reductase MsrB"/>
    <property type="match status" value="1"/>
</dbReference>
<dbReference type="PANTHER" id="PTHR10173">
    <property type="entry name" value="METHIONINE SULFOXIDE REDUCTASE"/>
    <property type="match status" value="1"/>
</dbReference>
<dbReference type="PANTHER" id="PTHR10173:SF59">
    <property type="entry name" value="PEPTIDE METHIONINE SULFOXIDE REDUCTASE MSRA_MSRB"/>
    <property type="match status" value="1"/>
</dbReference>
<dbReference type="Pfam" id="PF01641">
    <property type="entry name" value="SelR"/>
    <property type="match status" value="1"/>
</dbReference>
<dbReference type="SUPFAM" id="SSF51316">
    <property type="entry name" value="Mss4-like"/>
    <property type="match status" value="1"/>
</dbReference>
<dbReference type="PROSITE" id="PS51790">
    <property type="entry name" value="MSRB"/>
    <property type="match status" value="1"/>
</dbReference>
<reference key="1">
    <citation type="journal article" date="2003" name="Genome Res.">
        <title>Genome sequence of an M3 strain of Streptococcus pyogenes reveals a large-scale genomic rearrangement in invasive strains and new insights into phage evolution.</title>
        <authorList>
            <person name="Nakagawa I."/>
            <person name="Kurokawa K."/>
            <person name="Yamashita A."/>
            <person name="Nakata M."/>
            <person name="Tomiyasu Y."/>
            <person name="Okahashi N."/>
            <person name="Kawabata S."/>
            <person name="Yamazaki K."/>
            <person name="Shiba T."/>
            <person name="Yasunaga T."/>
            <person name="Hayashi H."/>
            <person name="Hattori M."/>
            <person name="Hamada S."/>
        </authorList>
    </citation>
    <scope>NUCLEOTIDE SEQUENCE [LARGE SCALE GENOMIC DNA]</scope>
    <source>
        <strain>SSI-1</strain>
    </source>
</reference>
<organism>
    <name type="scientific">Streptococcus pyogenes serotype M3 (strain SSI-1)</name>
    <dbReference type="NCBI Taxonomy" id="193567"/>
    <lineage>
        <taxon>Bacteria</taxon>
        <taxon>Bacillati</taxon>
        <taxon>Bacillota</taxon>
        <taxon>Bacilli</taxon>
        <taxon>Lactobacillales</taxon>
        <taxon>Streptococcaceae</taxon>
        <taxon>Streptococcus</taxon>
    </lineage>
</organism>